<feature type="chain" id="PRO_1000019159" description="Probable molybdenum cofactor guanylyltransferase">
    <location>
        <begin position="1"/>
        <end position="201"/>
    </location>
</feature>
<feature type="binding site" evidence="1">
    <location>
        <begin position="6"/>
        <end position="8"/>
    </location>
    <ligand>
        <name>GTP</name>
        <dbReference type="ChEBI" id="CHEBI:37565"/>
    </ligand>
</feature>
<feature type="binding site" evidence="1">
    <location>
        <position position="18"/>
    </location>
    <ligand>
        <name>GTP</name>
        <dbReference type="ChEBI" id="CHEBI:37565"/>
    </ligand>
</feature>
<feature type="binding site" evidence="1">
    <location>
        <position position="65"/>
    </location>
    <ligand>
        <name>GTP</name>
        <dbReference type="ChEBI" id="CHEBI:37565"/>
    </ligand>
</feature>
<feature type="binding site" evidence="1">
    <location>
        <position position="97"/>
    </location>
    <ligand>
        <name>GTP</name>
        <dbReference type="ChEBI" id="CHEBI:37565"/>
    </ligand>
</feature>
<feature type="binding site" evidence="1">
    <location>
        <position position="97"/>
    </location>
    <ligand>
        <name>Mg(2+)</name>
        <dbReference type="ChEBI" id="CHEBI:18420"/>
    </ligand>
</feature>
<proteinExistence type="inferred from homology"/>
<protein>
    <recommendedName>
        <fullName evidence="1">Probable molybdenum cofactor guanylyltransferase</fullName>
        <shortName evidence="1">MoCo guanylyltransferase</shortName>
        <ecNumber evidence="1">2.7.7.77</ecNumber>
    </recommendedName>
    <alternativeName>
        <fullName evidence="1">GTP:molybdopterin guanylyltransferase</fullName>
    </alternativeName>
    <alternativeName>
        <fullName evidence="1">Mo-MPT guanylyltransferase</fullName>
    </alternativeName>
    <alternativeName>
        <fullName evidence="1">Molybdopterin guanylyltransferase</fullName>
    </alternativeName>
    <alternativeName>
        <fullName evidence="1">Molybdopterin-guanine dinucleotide synthase</fullName>
        <shortName evidence="1">MGD synthase</shortName>
    </alternativeName>
</protein>
<comment type="function">
    <text evidence="1">Transfers a GMP moiety from GTP to Mo-molybdopterin (Mo-MPT) cofactor (Moco or molybdenum cofactor) to form Mo-molybdopterin guanine dinucleotide (Mo-MGD) cofactor.</text>
</comment>
<comment type="catalytic activity">
    <reaction evidence="1">
        <text>Mo-molybdopterin + GTP + H(+) = Mo-molybdopterin guanine dinucleotide + diphosphate</text>
        <dbReference type="Rhea" id="RHEA:34243"/>
        <dbReference type="ChEBI" id="CHEBI:15378"/>
        <dbReference type="ChEBI" id="CHEBI:33019"/>
        <dbReference type="ChEBI" id="CHEBI:37565"/>
        <dbReference type="ChEBI" id="CHEBI:71302"/>
        <dbReference type="ChEBI" id="CHEBI:71310"/>
        <dbReference type="EC" id="2.7.7.77"/>
    </reaction>
</comment>
<comment type="cofactor">
    <cofactor evidence="1">
        <name>Mg(2+)</name>
        <dbReference type="ChEBI" id="CHEBI:18420"/>
    </cofactor>
</comment>
<comment type="subcellular location">
    <subcellularLocation>
        <location evidence="1">Cytoplasm</location>
    </subcellularLocation>
</comment>
<comment type="domain">
    <text evidence="1">The N-terminal domain determines nucleotide recognition and specific binding, while the C-terminal domain determines the specific binding to the target protein.</text>
</comment>
<comment type="similarity">
    <text evidence="1">Belongs to the MobA family.</text>
</comment>
<name>MOBA_STAHJ</name>
<dbReference type="EC" id="2.7.7.77" evidence="1"/>
<dbReference type="EMBL" id="AP006716">
    <property type="protein sequence ID" value="BAE04092.1"/>
    <property type="molecule type" value="Genomic_DNA"/>
</dbReference>
<dbReference type="RefSeq" id="WP_011275106.1">
    <property type="nucleotide sequence ID" value="NC_007168.1"/>
</dbReference>
<dbReference type="SMR" id="Q4L8D3"/>
<dbReference type="KEGG" id="sha:SH0783"/>
<dbReference type="eggNOG" id="COG0746">
    <property type="taxonomic scope" value="Bacteria"/>
</dbReference>
<dbReference type="HOGENOM" id="CLU_055597_2_0_9"/>
<dbReference type="OrthoDB" id="9788394at2"/>
<dbReference type="Proteomes" id="UP000000543">
    <property type="component" value="Chromosome"/>
</dbReference>
<dbReference type="GO" id="GO:0005737">
    <property type="term" value="C:cytoplasm"/>
    <property type="evidence" value="ECO:0007669"/>
    <property type="project" value="UniProtKB-SubCell"/>
</dbReference>
<dbReference type="GO" id="GO:0005525">
    <property type="term" value="F:GTP binding"/>
    <property type="evidence" value="ECO:0007669"/>
    <property type="project" value="UniProtKB-UniRule"/>
</dbReference>
<dbReference type="GO" id="GO:0046872">
    <property type="term" value="F:metal ion binding"/>
    <property type="evidence" value="ECO:0007669"/>
    <property type="project" value="UniProtKB-KW"/>
</dbReference>
<dbReference type="GO" id="GO:0061603">
    <property type="term" value="F:molybdenum cofactor guanylyltransferase activity"/>
    <property type="evidence" value="ECO:0007669"/>
    <property type="project" value="UniProtKB-EC"/>
</dbReference>
<dbReference type="GO" id="GO:0006777">
    <property type="term" value="P:Mo-molybdopterin cofactor biosynthetic process"/>
    <property type="evidence" value="ECO:0007669"/>
    <property type="project" value="UniProtKB-KW"/>
</dbReference>
<dbReference type="CDD" id="cd02503">
    <property type="entry name" value="MobA"/>
    <property type="match status" value="1"/>
</dbReference>
<dbReference type="Gene3D" id="3.90.550.10">
    <property type="entry name" value="Spore Coat Polysaccharide Biosynthesis Protein SpsA, Chain A"/>
    <property type="match status" value="1"/>
</dbReference>
<dbReference type="HAMAP" id="MF_00316">
    <property type="entry name" value="MobA"/>
    <property type="match status" value="1"/>
</dbReference>
<dbReference type="InterPro" id="IPR025877">
    <property type="entry name" value="MobA-like_NTP_Trfase"/>
</dbReference>
<dbReference type="InterPro" id="IPR013482">
    <property type="entry name" value="Molybde_CF_guanTrfase"/>
</dbReference>
<dbReference type="InterPro" id="IPR029044">
    <property type="entry name" value="Nucleotide-diphossugar_trans"/>
</dbReference>
<dbReference type="NCBIfam" id="NF001457">
    <property type="entry name" value="PRK00317.1-3"/>
    <property type="match status" value="1"/>
</dbReference>
<dbReference type="PANTHER" id="PTHR19136">
    <property type="entry name" value="MOLYBDENUM COFACTOR GUANYLYLTRANSFERASE"/>
    <property type="match status" value="1"/>
</dbReference>
<dbReference type="PANTHER" id="PTHR19136:SF81">
    <property type="entry name" value="MOLYBDENUM COFACTOR GUANYLYLTRANSFERASE"/>
    <property type="match status" value="1"/>
</dbReference>
<dbReference type="Pfam" id="PF12804">
    <property type="entry name" value="NTP_transf_3"/>
    <property type="match status" value="1"/>
</dbReference>
<dbReference type="SUPFAM" id="SSF53448">
    <property type="entry name" value="Nucleotide-diphospho-sugar transferases"/>
    <property type="match status" value="1"/>
</dbReference>
<evidence type="ECO:0000255" key="1">
    <source>
        <dbReference type="HAMAP-Rule" id="MF_00316"/>
    </source>
</evidence>
<organism>
    <name type="scientific">Staphylococcus haemolyticus (strain JCSC1435)</name>
    <dbReference type="NCBI Taxonomy" id="279808"/>
    <lineage>
        <taxon>Bacteria</taxon>
        <taxon>Bacillati</taxon>
        <taxon>Bacillota</taxon>
        <taxon>Bacilli</taxon>
        <taxon>Bacillales</taxon>
        <taxon>Staphylococcaceae</taxon>
        <taxon>Staphylococcus</taxon>
    </lineage>
</organism>
<accession>Q4L8D3</accession>
<gene>
    <name evidence="1" type="primary">mobA</name>
    <name type="ordered locus">SH0783</name>
</gene>
<sequence>MKAIILAGGHSERFGKAKAFAEIDGQLFYQRIVQTLQETNMFNDIIISTNDQLANQFKHDNVIIDDANNKNKGPLAGIHTVMKQYNDEELFFVISVDTPMVTGKAISALYQFLVSRLIEDQIDIAAYSEHNRVIPTIAFYHPNCINVMDEALASNDYSLRHVYNNVTTECLDVTNIQSPEYWYKNINYQEDLDDLKQQINH</sequence>
<reference key="1">
    <citation type="journal article" date="2005" name="J. Bacteriol.">
        <title>Whole-genome sequencing of Staphylococcus haemolyticus uncovers the extreme plasticity of its genome and the evolution of human-colonizing staphylococcal species.</title>
        <authorList>
            <person name="Takeuchi F."/>
            <person name="Watanabe S."/>
            <person name="Baba T."/>
            <person name="Yuzawa H."/>
            <person name="Ito T."/>
            <person name="Morimoto Y."/>
            <person name="Kuroda M."/>
            <person name="Cui L."/>
            <person name="Takahashi M."/>
            <person name="Ankai A."/>
            <person name="Baba S."/>
            <person name="Fukui S."/>
            <person name="Lee J.C."/>
            <person name="Hiramatsu K."/>
        </authorList>
    </citation>
    <scope>NUCLEOTIDE SEQUENCE [LARGE SCALE GENOMIC DNA]</scope>
    <source>
        <strain>JCSC1435</strain>
    </source>
</reference>
<keyword id="KW-0963">Cytoplasm</keyword>
<keyword id="KW-0342">GTP-binding</keyword>
<keyword id="KW-0460">Magnesium</keyword>
<keyword id="KW-0479">Metal-binding</keyword>
<keyword id="KW-0501">Molybdenum cofactor biosynthesis</keyword>
<keyword id="KW-0547">Nucleotide-binding</keyword>
<keyword id="KW-0808">Transferase</keyword>